<accession>E3E7F9</accession>
<reference evidence="10" key="1">
    <citation type="journal article" date="2011" name="J. Bacteriol.">
        <title>Complete genome sequence of Paenibacillus polymyxa SC2, a strain of plant growth-promoting Rhizobacterium with broad-spectrum antimicrobial activity.</title>
        <authorList>
            <person name="Ma M."/>
            <person name="Wang C."/>
            <person name="Ding Y."/>
            <person name="Li L."/>
            <person name="Shen D."/>
            <person name="Jiang X."/>
            <person name="Guan D."/>
            <person name="Cao F."/>
            <person name="Chen H."/>
            <person name="Feng R."/>
            <person name="Wang X."/>
            <person name="Ge Y."/>
            <person name="Yao L."/>
            <person name="Bing X."/>
            <person name="Yang X."/>
            <person name="Li J."/>
            <person name="Du B."/>
        </authorList>
    </citation>
    <scope>NUCLEOTIDE SEQUENCE [LARGE SCALE GENOMIC DNA]</scope>
    <source>
        <strain evidence="10">SC2</strain>
    </source>
</reference>
<reference evidence="8" key="2">
    <citation type="journal article" date="2018" name="Molecules">
        <title>Screening of a Novel Polysaccharide Lyase Family 10 Pectate Lyase from Paenibacillus polymyxa KF-1: Cloning, Expression and Characterization.</title>
        <authorList>
            <person name="Zhao Y."/>
            <person name="Yuan Y."/>
            <person name="Zhang X."/>
            <person name="Li Y."/>
            <person name="Li Q."/>
            <person name="Zhou Y."/>
            <person name="Gao J."/>
        </authorList>
    </citation>
    <scope>SUBCELLULAR LOCATION</scope>
</reference>
<reference evidence="8" key="3">
    <citation type="journal article" date="2019" name="Int. J. Mol. Sci.">
        <title>A Novel PL9 Pectate Lyase from Paenibacillus polymyxa KF-1: Cloning, Expression, and Its Application in Pectin Degradation.</title>
        <authorList>
            <person name="Yuan Y."/>
            <person name="Zhang X.Y."/>
            <person name="Zhao Y."/>
            <person name="Zhang H."/>
            <person name="Zhou Y.F."/>
            <person name="Gao J."/>
        </authorList>
    </citation>
    <scope>FUNCTION</scope>
    <scope>CATALYTIC ACTIVITY</scope>
    <scope>COFACTOR</scope>
    <scope>ACTIVITY REGULATION</scope>
    <scope>BIOPHYSICOCHEMICAL PROPERTIES</scope>
    <source>
        <strain evidence="7">KF-1</strain>
    </source>
</reference>
<organism evidence="10">
    <name type="scientific">Paenibacillus polymyxa (strain SC2)</name>
    <name type="common">Bacillus polymyxa</name>
    <dbReference type="NCBI Taxonomy" id="886882"/>
    <lineage>
        <taxon>Bacteria</taxon>
        <taxon>Bacillati</taxon>
        <taxon>Bacillota</taxon>
        <taxon>Bacilli</taxon>
        <taxon>Bacillales</taxon>
        <taxon>Paenibacillaceae</taxon>
        <taxon>Paenibacillus</taxon>
    </lineage>
</organism>
<evidence type="ECO:0000250" key="1">
    <source>
        <dbReference type="UniProtKB" id="P0C1A6"/>
    </source>
</evidence>
<evidence type="ECO:0000250" key="2">
    <source>
        <dbReference type="UniProtKB" id="P0C1A7"/>
    </source>
</evidence>
<evidence type="ECO:0000255" key="3"/>
<evidence type="ECO:0000255" key="4">
    <source>
        <dbReference type="PROSITE-ProRule" id="PRU00303"/>
    </source>
</evidence>
<evidence type="ECO:0000269" key="5">
    <source>
    </source>
</evidence>
<evidence type="ECO:0000269" key="6">
    <source>
    </source>
</evidence>
<evidence type="ECO:0000303" key="7">
    <source>
    </source>
</evidence>
<evidence type="ECO:0000305" key="8"/>
<evidence type="ECO:0000312" key="9">
    <source>
        <dbReference type="EMBL" id="ADO59170.1"/>
    </source>
</evidence>
<evidence type="ECO:0000312" key="10">
    <source>
        <dbReference type="Proteomes" id="UP000006868"/>
    </source>
</evidence>
<sequence>MFKRNDRSKNGFNALRLGVSFVLASSCLIGTAYADVPSNNLPSTTLTEEAVSATDSAAASTTLAAGDLYVAPNGNVSNPGTISSPTTLEAALTQIAPGKTIYLRGGNYAYSSTITIQRGNNGSNGSLKGLVAYGSEKPVLDFSAQAFGSANRGLQLNGDFWLVKGLEVKGAGDNGIYIGGSNNRIENVETHHNRDTGLQLGRYSPNASTSEWPANNLILNSYSHDNADPDNGEDADGFAAKLTVGSGNVFDNCLAAYNVDDGWDLYSKTETGPIGAVTILNSVAHHNGQTSDGTSTANSDGNGFKLGGDKIKVNHIVKNSIAFQNKKHGFTYNSNPGTITLTNNTSWDNGQSNFAFDKGEHVFINNLSFEGTASDKTSGTDQDNSNVWWKNKKTTNAKGLAASADDFVSLVPSITRGADGSIQLGDFLKLAKGSDLIGSGTPSGNIGAR</sequence>
<proteinExistence type="evidence at protein level"/>
<keyword id="KW-0106">Calcium</keyword>
<keyword id="KW-0449">Lipoprotein</keyword>
<keyword id="KW-0456">Lyase</keyword>
<keyword id="KW-0479">Metal-binding</keyword>
<keyword id="KW-0564">Palmitate</keyword>
<keyword id="KW-0677">Repeat</keyword>
<keyword id="KW-0964">Secreted</keyword>
<keyword id="KW-0732">Signal</keyword>
<protein>
    <recommendedName>
        <fullName evidence="1">Pectate lyase L</fullName>
        <ecNumber evidence="6">4.2.2.2</ecNumber>
    </recommendedName>
    <alternativeName>
        <fullName evidence="7">PpPel9a</fullName>
    </alternativeName>
</protein>
<dbReference type="EC" id="4.2.2.2" evidence="6"/>
<dbReference type="EMBL" id="CP002213">
    <property type="protein sequence ID" value="ADO59170.1"/>
    <property type="molecule type" value="Genomic_DNA"/>
</dbReference>
<dbReference type="RefSeq" id="WP_013373703.1">
    <property type="nucleotide sequence ID" value="NC_014622.2"/>
</dbReference>
<dbReference type="SMR" id="E3E7F9"/>
<dbReference type="STRING" id="1406.LK13_12005"/>
<dbReference type="CAZy" id="PL9">
    <property type="family name" value="Polysaccharide Lyase Family 9"/>
</dbReference>
<dbReference type="KEGG" id="ppm:PPSC2_24525"/>
<dbReference type="PATRIC" id="fig|886882.15.peg.5195"/>
<dbReference type="eggNOG" id="COG3266">
    <property type="taxonomic scope" value="Bacteria"/>
</dbReference>
<dbReference type="HOGENOM" id="CLU_030634_0_0_9"/>
<dbReference type="OrthoDB" id="8660908at2"/>
<dbReference type="Proteomes" id="UP000006868">
    <property type="component" value="Chromosome"/>
</dbReference>
<dbReference type="GO" id="GO:0005576">
    <property type="term" value="C:extracellular region"/>
    <property type="evidence" value="ECO:0007669"/>
    <property type="project" value="UniProtKB-SubCell"/>
</dbReference>
<dbReference type="GO" id="GO:0016837">
    <property type="term" value="F:carbon-oxygen lyase activity, acting on polysaccharides"/>
    <property type="evidence" value="ECO:0007669"/>
    <property type="project" value="TreeGrafter"/>
</dbReference>
<dbReference type="GO" id="GO:0046872">
    <property type="term" value="F:metal ion binding"/>
    <property type="evidence" value="ECO:0007669"/>
    <property type="project" value="UniProtKB-KW"/>
</dbReference>
<dbReference type="Gene3D" id="2.160.20.10">
    <property type="entry name" value="Single-stranded right-handed beta-helix, Pectin lyase-like"/>
    <property type="match status" value="1"/>
</dbReference>
<dbReference type="InterPro" id="IPR039448">
    <property type="entry name" value="Beta_helix"/>
</dbReference>
<dbReference type="InterPro" id="IPR006626">
    <property type="entry name" value="PbH1"/>
</dbReference>
<dbReference type="InterPro" id="IPR012334">
    <property type="entry name" value="Pectin_lyas_fold"/>
</dbReference>
<dbReference type="InterPro" id="IPR011050">
    <property type="entry name" value="Pectin_lyase_fold/virulence"/>
</dbReference>
<dbReference type="InterPro" id="IPR052052">
    <property type="entry name" value="Polysaccharide_Lyase_9"/>
</dbReference>
<dbReference type="PANTHER" id="PTHR40088">
    <property type="entry name" value="PECTATE LYASE (EUROFUNG)"/>
    <property type="match status" value="1"/>
</dbReference>
<dbReference type="PANTHER" id="PTHR40088:SF1">
    <property type="entry name" value="PECTATE LYASE PEL9"/>
    <property type="match status" value="1"/>
</dbReference>
<dbReference type="Pfam" id="PF13229">
    <property type="entry name" value="Beta_helix"/>
    <property type="match status" value="1"/>
</dbReference>
<dbReference type="SMART" id="SM00710">
    <property type="entry name" value="PbH1"/>
    <property type="match status" value="7"/>
</dbReference>
<dbReference type="SUPFAM" id="SSF51126">
    <property type="entry name" value="Pectin lyase-like"/>
    <property type="match status" value="1"/>
</dbReference>
<name>PLYL_PAEPS</name>
<feature type="signal peptide" evidence="4">
    <location>
        <begin position="1"/>
        <end position="26"/>
    </location>
</feature>
<feature type="chain" id="PRO_5003168610" description="Pectate lyase L" evidence="4">
    <location>
        <begin position="27"/>
        <end position="449"/>
    </location>
</feature>
<feature type="repeat" description="PbH1 1" evidence="3">
    <location>
        <begin position="158"/>
        <end position="179"/>
    </location>
</feature>
<feature type="repeat" description="PbH1 2" evidence="3">
    <location>
        <begin position="180"/>
        <end position="202"/>
    </location>
</feature>
<feature type="repeat" description="PbH1 3" evidence="3">
    <location>
        <begin position="213"/>
        <end position="242"/>
    </location>
</feature>
<feature type="repeat" description="PbH1 4" evidence="3">
    <location>
        <begin position="245"/>
        <end position="267"/>
    </location>
</feature>
<feature type="repeat" description="PbH1 5" evidence="3">
    <location>
        <begin position="274"/>
        <end position="308"/>
    </location>
</feature>
<feature type="repeat" description="PbH1 6" evidence="3">
    <location>
        <begin position="336"/>
        <end position="358"/>
    </location>
</feature>
<feature type="repeat" description="PbH1 7" evidence="3">
    <location>
        <begin position="359"/>
        <end position="391"/>
    </location>
</feature>
<feature type="active site" description="Proton acceptor" evidence="2">
    <location>
        <position position="305"/>
    </location>
</feature>
<feature type="binding site" evidence="2">
    <location>
        <position position="236"/>
    </location>
    <ligand>
        <name>Ca(2+)</name>
        <dbReference type="ChEBI" id="CHEBI:29108"/>
        <label>1</label>
    </ligand>
</feature>
<feature type="binding site" evidence="2">
    <location>
        <position position="260"/>
    </location>
    <ligand>
        <name>Ca(2+)</name>
        <dbReference type="ChEBI" id="CHEBI:29108"/>
        <label>1</label>
    </ligand>
</feature>
<feature type="binding site" evidence="2">
    <location>
        <position position="261"/>
    </location>
    <ligand>
        <name>Ca(2+)</name>
        <dbReference type="ChEBI" id="CHEBI:29108"/>
        <label>1</label>
    </ligand>
</feature>
<feature type="binding site" evidence="2">
    <location>
        <position position="264"/>
    </location>
    <ligand>
        <name>Ca(2+)</name>
        <dbReference type="ChEBI" id="CHEBI:29108"/>
        <label>1</label>
    </ligand>
</feature>
<feature type="lipid moiety-binding region" description="N-palmitoyl cysteine" evidence="4">
    <location>
        <position position="27"/>
    </location>
</feature>
<feature type="lipid moiety-binding region" description="S-diacylglycerol cysteine" evidence="4">
    <location>
        <position position="27"/>
    </location>
</feature>
<comment type="function">
    <text evidence="6">Presents an endo-cleaving activity on the homogalacturonan (HG) region in pectin with a preference for low- or unmethylated pectin.</text>
</comment>
<comment type="catalytic activity">
    <reaction evidence="6">
        <text>Eliminative cleavage of (1-&gt;4)-alpha-D-galacturonan to give oligosaccharides with 4-deoxy-alpha-D-galact-4-enuronosyl groups at their non-reducing ends.</text>
        <dbReference type="EC" id="4.2.2.2"/>
    </reaction>
</comment>
<comment type="cofactor">
    <cofactor evidence="6">
        <name>Ca(2+)</name>
        <dbReference type="ChEBI" id="CHEBI:29108"/>
    </cofactor>
</comment>
<comment type="activity regulation">
    <text evidence="6">Activated in presence of the surfactant polysorbate 20, while inhibited in the presence of polysorbate 40, polysorbate 60, polysorbate 80, Triton X-100 and sodium dodecyl sulfate (PubMed:31234557). Inhibited by the metal chelator ethylenediaminetetraacetic acid (EDTA) (PubMed:31234557). Inhibited by iron and cobalt ions (PubMed:31234557).</text>
</comment>
<comment type="biophysicochemical properties">
    <phDependence>
        <text evidence="6">Optimum pH is 10.</text>
    </phDependence>
    <temperatureDependence>
        <text evidence="6">Optimum temperature is 40 degrees Celsius.</text>
    </temperatureDependence>
</comment>
<comment type="subcellular location">
    <subcellularLocation>
        <location evidence="5">Secreted</location>
    </subcellularLocation>
</comment>
<comment type="similarity">
    <text evidence="8">Belongs to the polysaccharide lyase 9 family.</text>
</comment>
<gene>
    <name evidence="7" type="primary">pel9A</name>
    <name evidence="9" type="synonym">pelL</name>
    <name evidence="9" type="ordered locus">PPSC2_24525</name>
    <name evidence="9" type="ORF">PPSC2_c5233</name>
</gene>